<sequence length="156" mass="16772">MLQSQFAQAPRLALADTIIDAKARKNLSWQDLTDGTGLSLAFVTAALLGQHALPATAADLVCDKLGLDQDASRLLQSIPLRGSIAGGIPTDPTVYRFYEMLQVYGSTLKALVHEQFGDGIISAINFKLDIKKVEDPEGGSRAVITLDGKYLPTKPF</sequence>
<reference key="1">
    <citation type="journal article" date="2005" name="Nat. Biotechnol.">
        <title>Complete genome sequence of the plant commensal Pseudomonas fluorescens Pf-5.</title>
        <authorList>
            <person name="Paulsen I.T."/>
            <person name="Press C.M."/>
            <person name="Ravel J."/>
            <person name="Kobayashi D.Y."/>
            <person name="Myers G.S.A."/>
            <person name="Mavrodi D.V."/>
            <person name="DeBoy R.T."/>
            <person name="Seshadri R."/>
            <person name="Ren Q."/>
            <person name="Madupu R."/>
            <person name="Dodson R.J."/>
            <person name="Durkin A.S."/>
            <person name="Brinkac L.M."/>
            <person name="Daugherty S.C."/>
            <person name="Sullivan S.A."/>
            <person name="Rosovitz M.J."/>
            <person name="Gwinn M.L."/>
            <person name="Zhou L."/>
            <person name="Schneider D.J."/>
            <person name="Cartinhour S.W."/>
            <person name="Nelson W.C."/>
            <person name="Weidman J."/>
            <person name="Watkins K."/>
            <person name="Tran K."/>
            <person name="Khouri H."/>
            <person name="Pierson E.A."/>
            <person name="Pierson L.S. III"/>
            <person name="Thomashow L.S."/>
            <person name="Loper J.E."/>
        </authorList>
    </citation>
    <scope>NUCLEOTIDE SEQUENCE [LARGE SCALE GENOMIC DNA]</scope>
    <source>
        <strain>ATCC BAA-477 / NRRL B-23932 / Pf-5</strain>
    </source>
</reference>
<keyword id="KW-0456">Lyase</keyword>
<dbReference type="EC" id="4.2.1.104" evidence="1"/>
<dbReference type="EMBL" id="CP000076">
    <property type="protein sequence ID" value="AAY90773.1"/>
    <property type="molecule type" value="Genomic_DNA"/>
</dbReference>
<dbReference type="RefSeq" id="WP_011059828.1">
    <property type="nucleotide sequence ID" value="NC_004129.6"/>
</dbReference>
<dbReference type="SMR" id="Q4KGL6"/>
<dbReference type="STRING" id="220664.PFL_1490"/>
<dbReference type="GeneID" id="57474511"/>
<dbReference type="KEGG" id="pfl:PFL_1490"/>
<dbReference type="PATRIC" id="fig|220664.5.peg.1524"/>
<dbReference type="eggNOG" id="COG1513">
    <property type="taxonomic scope" value="Bacteria"/>
</dbReference>
<dbReference type="HOGENOM" id="CLU_103452_1_1_6"/>
<dbReference type="Proteomes" id="UP000008540">
    <property type="component" value="Chromosome"/>
</dbReference>
<dbReference type="GO" id="GO:0008824">
    <property type="term" value="F:cyanate hydratase activity"/>
    <property type="evidence" value="ECO:0007669"/>
    <property type="project" value="UniProtKB-UniRule"/>
</dbReference>
<dbReference type="GO" id="GO:0003677">
    <property type="term" value="F:DNA binding"/>
    <property type="evidence" value="ECO:0007669"/>
    <property type="project" value="InterPro"/>
</dbReference>
<dbReference type="GO" id="GO:0009439">
    <property type="term" value="P:cyanate metabolic process"/>
    <property type="evidence" value="ECO:0007669"/>
    <property type="project" value="UniProtKB-UniRule"/>
</dbReference>
<dbReference type="CDD" id="cd00559">
    <property type="entry name" value="Cyanase_C"/>
    <property type="match status" value="1"/>
</dbReference>
<dbReference type="Gene3D" id="3.30.1160.10">
    <property type="entry name" value="Cyanate lyase, C-terminal domain"/>
    <property type="match status" value="1"/>
</dbReference>
<dbReference type="Gene3D" id="1.10.260.40">
    <property type="entry name" value="lambda repressor-like DNA-binding domains"/>
    <property type="match status" value="1"/>
</dbReference>
<dbReference type="HAMAP" id="MF_00535">
    <property type="entry name" value="Cyanate_hydrat"/>
    <property type="match status" value="1"/>
</dbReference>
<dbReference type="InterPro" id="IPR008076">
    <property type="entry name" value="Cyanase"/>
</dbReference>
<dbReference type="InterPro" id="IPR003712">
    <property type="entry name" value="Cyanate_lyase_C"/>
</dbReference>
<dbReference type="InterPro" id="IPR036581">
    <property type="entry name" value="Cyanate_lyase_C_sf"/>
</dbReference>
<dbReference type="InterPro" id="IPR048564">
    <property type="entry name" value="CYNS_N"/>
</dbReference>
<dbReference type="InterPro" id="IPR010982">
    <property type="entry name" value="Lambda_DNA-bd_dom_sf"/>
</dbReference>
<dbReference type="NCBIfam" id="TIGR00673">
    <property type="entry name" value="cynS"/>
    <property type="match status" value="1"/>
</dbReference>
<dbReference type="NCBIfam" id="NF002773">
    <property type="entry name" value="PRK02866.1"/>
    <property type="match status" value="1"/>
</dbReference>
<dbReference type="PANTHER" id="PTHR34186">
    <property type="entry name" value="CYANATE HYDRATASE"/>
    <property type="match status" value="1"/>
</dbReference>
<dbReference type="PANTHER" id="PTHR34186:SF2">
    <property type="entry name" value="CYANATE HYDRATASE"/>
    <property type="match status" value="1"/>
</dbReference>
<dbReference type="Pfam" id="PF02560">
    <property type="entry name" value="Cyanate_lyase"/>
    <property type="match status" value="1"/>
</dbReference>
<dbReference type="Pfam" id="PF21291">
    <property type="entry name" value="CYNS_N"/>
    <property type="match status" value="1"/>
</dbReference>
<dbReference type="PIRSF" id="PIRSF001263">
    <property type="entry name" value="Cyanate_hydratas"/>
    <property type="match status" value="1"/>
</dbReference>
<dbReference type="PRINTS" id="PR01693">
    <property type="entry name" value="CYANASE"/>
</dbReference>
<dbReference type="SMART" id="SM01116">
    <property type="entry name" value="Cyanate_lyase"/>
    <property type="match status" value="1"/>
</dbReference>
<dbReference type="SUPFAM" id="SSF55234">
    <property type="entry name" value="Cyanase C-terminal domain"/>
    <property type="match status" value="1"/>
</dbReference>
<dbReference type="SUPFAM" id="SSF47413">
    <property type="entry name" value="lambda repressor-like DNA-binding domains"/>
    <property type="match status" value="1"/>
</dbReference>
<protein>
    <recommendedName>
        <fullName evidence="1">Cyanate hydratase</fullName>
        <shortName evidence="1">Cyanase</shortName>
        <ecNumber evidence="1">4.2.1.104</ecNumber>
    </recommendedName>
    <alternativeName>
        <fullName evidence="1">Cyanate hydrolase</fullName>
    </alternativeName>
    <alternativeName>
        <fullName evidence="1">Cyanate lyase</fullName>
    </alternativeName>
</protein>
<proteinExistence type="inferred from homology"/>
<accession>Q4KGL6</accession>
<evidence type="ECO:0000255" key="1">
    <source>
        <dbReference type="HAMAP-Rule" id="MF_00535"/>
    </source>
</evidence>
<name>CYNS_PSEF5</name>
<gene>
    <name evidence="1" type="primary">cynS</name>
    <name type="ordered locus">PFL_1490</name>
</gene>
<comment type="function">
    <text evidence="1">Catalyzes the reaction of cyanate with bicarbonate to produce ammonia and carbon dioxide.</text>
</comment>
<comment type="catalytic activity">
    <reaction evidence="1">
        <text>cyanate + hydrogencarbonate + 3 H(+) = NH4(+) + 2 CO2</text>
        <dbReference type="Rhea" id="RHEA:11120"/>
        <dbReference type="ChEBI" id="CHEBI:15378"/>
        <dbReference type="ChEBI" id="CHEBI:16526"/>
        <dbReference type="ChEBI" id="CHEBI:17544"/>
        <dbReference type="ChEBI" id="CHEBI:28938"/>
        <dbReference type="ChEBI" id="CHEBI:29195"/>
        <dbReference type="EC" id="4.2.1.104"/>
    </reaction>
</comment>
<comment type="similarity">
    <text evidence="1">Belongs to the cyanase family.</text>
</comment>
<feature type="chain" id="PRO_1000051485" description="Cyanate hydratase">
    <location>
        <begin position="1"/>
        <end position="156"/>
    </location>
</feature>
<feature type="active site" evidence="1">
    <location>
        <position position="96"/>
    </location>
</feature>
<feature type="active site" evidence="1">
    <location>
        <position position="99"/>
    </location>
</feature>
<feature type="active site" evidence="1">
    <location>
        <position position="122"/>
    </location>
</feature>
<organism>
    <name type="scientific">Pseudomonas fluorescens (strain ATCC BAA-477 / NRRL B-23932 / Pf-5)</name>
    <dbReference type="NCBI Taxonomy" id="220664"/>
    <lineage>
        <taxon>Bacteria</taxon>
        <taxon>Pseudomonadati</taxon>
        <taxon>Pseudomonadota</taxon>
        <taxon>Gammaproteobacteria</taxon>
        <taxon>Pseudomonadales</taxon>
        <taxon>Pseudomonadaceae</taxon>
        <taxon>Pseudomonas</taxon>
    </lineage>
</organism>